<accession>E7QAA9</accession>
<dbReference type="EMBL" id="AEHH01000075">
    <property type="protein sequence ID" value="EGA56526.1"/>
    <property type="molecule type" value="Genomic_DNA"/>
</dbReference>
<dbReference type="SMR" id="E7QAA9"/>
<dbReference type="HOGENOM" id="CLU_1099229_0_0_1"/>
<dbReference type="OrthoDB" id="4043735at2759"/>
<dbReference type="GO" id="GO:0005823">
    <property type="term" value="C:central plaque of spindle pole body"/>
    <property type="evidence" value="ECO:0007669"/>
    <property type="project" value="InterPro"/>
</dbReference>
<dbReference type="GO" id="GO:0005737">
    <property type="term" value="C:cytoplasm"/>
    <property type="evidence" value="ECO:0007669"/>
    <property type="project" value="UniProtKB-KW"/>
</dbReference>
<dbReference type="GO" id="GO:0005634">
    <property type="term" value="C:nucleus"/>
    <property type="evidence" value="ECO:0007669"/>
    <property type="project" value="UniProtKB-SubCell"/>
</dbReference>
<dbReference type="GO" id="GO:0005200">
    <property type="term" value="F:structural constituent of cytoskeleton"/>
    <property type="evidence" value="ECO:0007669"/>
    <property type="project" value="InterPro"/>
</dbReference>
<dbReference type="GO" id="GO:0030474">
    <property type="term" value="P:spindle pole body duplication"/>
    <property type="evidence" value="ECO:0007669"/>
    <property type="project" value="InterPro"/>
</dbReference>
<dbReference type="InterPro" id="IPR031392">
    <property type="entry name" value="Spc29"/>
</dbReference>
<dbReference type="Pfam" id="PF17082">
    <property type="entry name" value="Spc29"/>
    <property type="match status" value="1"/>
</dbReference>
<comment type="function">
    <text evidence="1">Component of the spindle pole body (SPB) required for the proper execution of spindle pole body (SPB) duplication. Links the central plaque component SPC42 to the inner plaque component SPC110 (By similarity).</text>
</comment>
<comment type="subunit">
    <text evidence="1">Component of the SPC110 complex containing at least CMD1, SPC29, SPC42 and SCP110. Interacts with BBP1.</text>
</comment>
<comment type="subcellular location">
    <subcellularLocation>
        <location evidence="1">Nucleus</location>
    </subcellularLocation>
    <subcellularLocation>
        <location evidence="1">Cytoplasm</location>
        <location evidence="1">Cytoskeleton</location>
        <location evidence="1">Microtubule organizing center</location>
        <location evidence="1">Spindle pole body</location>
    </subcellularLocation>
</comment>
<comment type="PTM">
    <text evidence="1">MPS1-mediated phosphorylation at Thr-240 is required for spindle pole body duplication.</text>
</comment>
<comment type="similarity">
    <text evidence="4">Belongs to the SPC29 family.</text>
</comment>
<organism>
    <name type="scientific">Saccharomyces cerevisiae (strain FostersB)</name>
    <name type="common">Baker's yeast</name>
    <dbReference type="NCBI Taxonomy" id="764102"/>
    <lineage>
        <taxon>Eukaryota</taxon>
        <taxon>Fungi</taxon>
        <taxon>Dikarya</taxon>
        <taxon>Ascomycota</taxon>
        <taxon>Saccharomycotina</taxon>
        <taxon>Saccharomycetes</taxon>
        <taxon>Saccharomycetales</taxon>
        <taxon>Saccharomycetaceae</taxon>
        <taxon>Saccharomyces</taxon>
    </lineage>
</organism>
<reference key="1">
    <citation type="journal article" date="2011" name="PLoS Genet.">
        <title>Whole-genome comparison reveals novel genetic elements that characterize the genome of industrial strains of Saccharomyces cerevisiae.</title>
        <authorList>
            <person name="Borneman A.R."/>
            <person name="Desany B.A."/>
            <person name="Riches D."/>
            <person name="Affourtit J.P."/>
            <person name="Forgan A.H."/>
            <person name="Pretorius I.S."/>
            <person name="Egholm M."/>
            <person name="Chambers P.J."/>
        </authorList>
    </citation>
    <scope>NUCLEOTIDE SEQUENCE [LARGE SCALE GENOMIC DNA]</scope>
    <source>
        <strain>FostersB</strain>
    </source>
</reference>
<keyword id="KW-0963">Cytoplasm</keyword>
<keyword id="KW-0206">Cytoskeleton</keyword>
<keyword id="KW-0539">Nucleus</keyword>
<keyword id="KW-0597">Phosphoprotein</keyword>
<evidence type="ECO:0000250" key="1"/>
<evidence type="ECO:0000250" key="2">
    <source>
        <dbReference type="UniProtKB" id="P33419"/>
    </source>
</evidence>
<evidence type="ECO:0000256" key="3">
    <source>
        <dbReference type="SAM" id="MobiDB-lite"/>
    </source>
</evidence>
<evidence type="ECO:0000305" key="4"/>
<name>SPC29_YEASB</name>
<protein>
    <recommendedName>
        <fullName>Spindle pole component 29</fullName>
    </recommendedName>
</protein>
<gene>
    <name type="primary">SPC29</name>
    <name type="synonym">LPH3</name>
    <name type="synonym">NIP29</name>
    <name type="ORF">FOSTERSB_4788</name>
</gene>
<sequence>MDYNNFGNSASKKFQDDTLNRVRKEHEEALKKLREENFSSNTSELGNKKHYRAQERMSSPLHRLSPAGKSDDRKVKSPLDDKLRRQLREGNTRLPPPPFSSYGMPPTNRSNLDRIRRRTSSPVRTDKFASQNVIDDQRLEIKYLERIVYDQGTVIDNLTSRITRLESFILNSISDRGDKNFASLEHSRSFSGFPTNKTYGLQMGGLYENDMPYRRSSDNINKEGAREDRSSQIHIENESTEDILKILSSSFHN</sequence>
<feature type="chain" id="PRO_0000409194" description="Spindle pole component 29">
    <location>
        <begin position="1"/>
        <end position="253"/>
    </location>
</feature>
<feature type="region of interest" description="Disordered" evidence="3">
    <location>
        <begin position="1"/>
        <end position="20"/>
    </location>
</feature>
<feature type="region of interest" description="Disordered" evidence="3">
    <location>
        <begin position="31"/>
        <end position="123"/>
    </location>
</feature>
<feature type="region of interest" description="Disordered" evidence="3">
    <location>
        <begin position="210"/>
        <end position="232"/>
    </location>
</feature>
<feature type="compositionally biased region" description="Polar residues" evidence="3">
    <location>
        <begin position="1"/>
        <end position="12"/>
    </location>
</feature>
<feature type="compositionally biased region" description="Basic and acidic residues" evidence="3">
    <location>
        <begin position="69"/>
        <end position="91"/>
    </location>
</feature>
<feature type="compositionally biased region" description="Basic and acidic residues" evidence="3">
    <location>
        <begin position="211"/>
        <end position="232"/>
    </location>
</feature>
<feature type="modified residue" description="Phosphothreonine" evidence="2">
    <location>
        <position position="18"/>
    </location>
</feature>
<feature type="modified residue" description="Phosphoserine" evidence="2">
    <location>
        <position position="65"/>
    </location>
</feature>
<feature type="modified residue" description="Phosphothreonine; by MPS1" evidence="2">
    <location>
        <position position="240"/>
    </location>
</feature>
<proteinExistence type="inferred from homology"/>